<comment type="function">
    <text evidence="1 2 3 4">Has strong anti-HIV activity against T-tropic strains of HIV-1 and weaker activity against M-tropic strains of HIV-1. Inhibits HIV-1 fusion and infection of CD4 LTR beta-gal cells in vitro. Inhibits fusion of HIV infected CEM-SS cells with uninfected CEM-SS cells, and fusion of HIV-1 Env expressing HL2/3 cells with CD4 LTR beta-gal cells. Binds to HIV gp120, HIV gp160 and to a lesser extent HIV gp41. Binding to HIV gp120 is glycosylation dependent. Binds with high specificity to the tetrasaccharide Man-alpha-1,2-Man-alpha-1,6-Man-alpha-1,6-Man and also binds the higher-order oligosaccharides oligomannose 8 and oligomannose 9. Does not bind to monosaccharides, complex or hybrid N-linked oligosaccharides or chitin.</text>
</comment>
<comment type="mass spectrometry"/>
<accession>P86041</accession>
<evidence type="ECO:0000269" key="1">
    <source>
    </source>
</evidence>
<evidence type="ECO:0000269" key="2">
    <source>
    </source>
</evidence>
<evidence type="ECO:0000269" key="3">
    <source>
    </source>
</evidence>
<evidence type="ECO:0000269" key="4">
    <source>
    </source>
</evidence>
<evidence type="ECO:0000269" key="5">
    <source>
    </source>
</evidence>
<evidence type="ECO:0000303" key="6">
    <source>
    </source>
</evidence>
<evidence type="ECO:0000303" key="7">
    <source>
    </source>
</evidence>
<evidence type="ECO:0000305" key="8"/>
<evidence type="ECO:0007829" key="9">
    <source>
        <dbReference type="PDB" id="2JMV"/>
    </source>
</evidence>
<evidence type="ECO:0007829" key="10">
    <source>
        <dbReference type="PDB" id="2QSK"/>
    </source>
</evidence>
<reference evidence="8" key="1">
    <citation type="journal article" date="2003" name="Biochemistry">
        <title>A potent novel anti-HIV protein from the cultured cyanobacterium Scytonema varium.</title>
        <authorList>
            <person name="Bokesch H.R."/>
            <person name="O'Keefe B.R."/>
            <person name="McKee T.C."/>
            <person name="Pannell L.K."/>
            <person name="Patterson G.M.L."/>
            <person name="Gardella R.S."/>
            <person name="Sowder R.C. II"/>
            <person name="Turpin J."/>
            <person name="Watson K."/>
            <person name="Buckheit R.W. Jr."/>
            <person name="Boyd M.R."/>
        </authorList>
    </citation>
    <scope>PROTEIN SEQUENCE</scope>
    <scope>FUNCTION</scope>
    <scope>MASS SPECTROMETRY</scope>
    <scope>DISULFIDE BONDS</scope>
    <source>
        <strain evidence="1">HG-24-1</strain>
    </source>
</reference>
<reference evidence="8" key="2">
    <citation type="journal article" date="2006" name="Peptides">
        <title>Potent anti-HIV activity of scytovirin domain 1 peptide.</title>
        <authorList>
            <person name="Xiong C."/>
            <person name="O'Keefe B.R."/>
            <person name="Byrd R.A."/>
            <person name="McMahon J.B."/>
        </authorList>
    </citation>
    <scope>FUNCTION</scope>
</reference>
<reference evidence="8" key="3">
    <citation type="journal article" date="2006" name="Protein Expr. Purif.">
        <title>Overexpression and purification of scytovirin, a potent, novel anti-HIV protein from the cultured cyanobacterium Scytonema varium.</title>
        <authorList>
            <person name="Xiong C."/>
            <person name="O'Keefe B.R."/>
            <person name="Botos I."/>
            <person name="Wlodawer A."/>
            <person name="McMahon J.B."/>
        </authorList>
    </citation>
    <scope>SYNTHESIS</scope>
</reference>
<reference evidence="8" key="4">
    <citation type="journal article" date="2007" name="Curr. Pharm. Des.">
        <title>Carbohydrate microarrays as tools in HIV glycobiology.</title>
        <authorList>
            <person name="Ratner D.M."/>
            <person name="Seeberger P.H."/>
        </authorList>
    </citation>
    <scope>FUNCTION</scope>
</reference>
<reference evidence="8" key="5">
    <citation type="journal article" date="2007" name="J. Mol. Biol.">
        <title>The novel fold of scytovirin reveals a new twist for antiviral entry inhibitors.</title>
        <authorList>
            <person name="McFeeters R.L."/>
            <person name="Xiong C."/>
            <person name="O'Keefe B.R."/>
            <person name="Bokesch H.R."/>
            <person name="McMahon J.B."/>
            <person name="Ratner D.M."/>
            <person name="Castelli R."/>
            <person name="Seeberger P.H."/>
            <person name="Byrd R.A."/>
        </authorList>
    </citation>
    <scope>STRUCTURE BY NMR</scope>
    <scope>FUNCTION</scope>
</reference>
<reference evidence="8" key="6">
    <citation type="journal article" date="2007" name="Protein Sci.">
        <title>Atomic-resolution crystal structure of the antiviral lectin scytovirin.</title>
        <authorList>
            <person name="Moulaei T."/>
            <person name="Botos I."/>
            <person name="Ziolkowska N.E."/>
            <person name="Bokesch H.R."/>
            <person name="Krumpe L.R."/>
            <person name="McKee T.C."/>
            <person name="O'Keefe B.R."/>
            <person name="Dauter Z."/>
            <person name="Wlodawer A."/>
        </authorList>
    </citation>
    <scope>X-RAY CRYSTALLOGRAPHY (1.0 ANGSTROMS)</scope>
    <scope>DISULFIDE BONDS</scope>
</reference>
<protein>
    <recommendedName>
        <fullName evidence="6">Scytovirin</fullName>
        <shortName evidence="7">SVN</shortName>
    </recommendedName>
</protein>
<keyword id="KW-0002">3D-structure</keyword>
<keyword id="KW-0930">Antiviral protein</keyword>
<keyword id="KW-0903">Direct protein sequencing</keyword>
<keyword id="KW-1015">Disulfide bond</keyword>
<keyword id="KW-0430">Lectin</keyword>
<dbReference type="PDB" id="2JMV">
    <property type="method" value="NMR"/>
    <property type="chains" value="A=1-95"/>
</dbReference>
<dbReference type="PDB" id="2QSK">
    <property type="method" value="X-ray"/>
    <property type="resolution" value="1.00 A"/>
    <property type="chains" value="A=1-95"/>
</dbReference>
<dbReference type="PDB" id="2QT4">
    <property type="method" value="X-ray"/>
    <property type="resolution" value="1.30 A"/>
    <property type="chains" value="A=1-95"/>
</dbReference>
<dbReference type="PDBsum" id="2JMV"/>
<dbReference type="PDBsum" id="2QSK"/>
<dbReference type="PDBsum" id="2QT4"/>
<dbReference type="SMR" id="P86041"/>
<dbReference type="UniLectin" id="P86041"/>
<dbReference type="EvolutionaryTrace" id="P86041"/>
<dbReference type="GO" id="GO:0030247">
    <property type="term" value="F:polysaccharide binding"/>
    <property type="evidence" value="ECO:0000314"/>
    <property type="project" value="UniProtKB"/>
</dbReference>
<dbReference type="GO" id="GO:0050688">
    <property type="term" value="P:regulation of defense response to virus"/>
    <property type="evidence" value="ECO:0007669"/>
    <property type="project" value="UniProtKB-KW"/>
</dbReference>
<dbReference type="InterPro" id="IPR049004">
    <property type="entry name" value="SVN-like_dom"/>
</dbReference>
<dbReference type="Pfam" id="PF20888">
    <property type="entry name" value="SVN"/>
    <property type="match status" value="1"/>
</dbReference>
<sequence>GSGPTYCWNEANNPGGPNRCSNNKQCDGARTCSSSGFCQGTSRKPDPGPKGPTYCWDEAKNPGGPNRCSNSKQCDGARTCSSSGFCQGTAGHAAA</sequence>
<proteinExistence type="evidence at protein level"/>
<name>SVN_SCYVA</name>
<organism>
    <name type="scientific">Scytonema varium</name>
    <dbReference type="NCBI Taxonomy" id="423208"/>
    <lineage>
        <taxon>Bacteria</taxon>
        <taxon>Bacillati</taxon>
        <taxon>Cyanobacteriota</taxon>
        <taxon>Cyanophyceae</taxon>
        <taxon>Nostocales</taxon>
        <taxon>Scytonemataceae</taxon>
        <taxon>Scytonema</taxon>
    </lineage>
</organism>
<feature type="chain" id="PRO_0000352757" description="Scytovirin">
    <location>
        <begin position="1"/>
        <end position="95"/>
    </location>
</feature>
<feature type="region of interest" description="SD1">
    <location>
        <begin position="3"/>
        <end position="41"/>
    </location>
</feature>
<feature type="region of interest" description="SD2">
    <location>
        <begin position="51"/>
        <end position="89"/>
    </location>
</feature>
<feature type="disulfide bond" evidence="1 5">
    <location>
        <begin position="7"/>
        <end position="55"/>
    </location>
</feature>
<feature type="disulfide bond" evidence="5">
    <location>
        <begin position="20"/>
        <end position="32"/>
    </location>
</feature>
<feature type="disulfide bond" evidence="5">
    <location>
        <begin position="26"/>
        <end position="38"/>
    </location>
</feature>
<feature type="disulfide bond" evidence="5">
    <location>
        <begin position="68"/>
        <end position="80"/>
    </location>
</feature>
<feature type="disulfide bond" evidence="5">
    <location>
        <begin position="74"/>
        <end position="86"/>
    </location>
</feature>
<feature type="helix" evidence="10">
    <location>
        <begin position="10"/>
        <end position="12"/>
    </location>
</feature>
<feature type="strand" evidence="9">
    <location>
        <begin position="14"/>
        <end position="18"/>
    </location>
</feature>
<feature type="helix" evidence="10">
    <location>
        <begin position="23"/>
        <end position="25"/>
    </location>
</feature>
<feature type="strand" evidence="10">
    <location>
        <begin position="36"/>
        <end position="40"/>
    </location>
</feature>
<feature type="strand" evidence="10">
    <location>
        <begin position="44"/>
        <end position="47"/>
    </location>
</feature>
<feature type="strand" evidence="9">
    <location>
        <begin position="50"/>
        <end position="53"/>
    </location>
</feature>
<feature type="helix" evidence="10">
    <location>
        <begin position="58"/>
        <end position="60"/>
    </location>
</feature>
<feature type="strand" evidence="9">
    <location>
        <begin position="61"/>
        <end position="66"/>
    </location>
</feature>
<feature type="helix" evidence="10">
    <location>
        <begin position="71"/>
        <end position="73"/>
    </location>
</feature>
<feature type="strand" evidence="10">
    <location>
        <begin position="84"/>
        <end position="88"/>
    </location>
</feature>